<sequence length="89" mass="10244">MALTQLRKQEIISNYQVHETDTGSADVQVAMLTERINRLSEHLQANKKDHSSRRGLLKLIGQRKRLLAYISQESREKYQALIARLGIRG</sequence>
<accession>B2J9H6</accession>
<protein>
    <recommendedName>
        <fullName evidence="1">Small ribosomal subunit protein uS15</fullName>
    </recommendedName>
    <alternativeName>
        <fullName evidence="2">30S ribosomal protein S15</fullName>
    </alternativeName>
</protein>
<organism>
    <name type="scientific">Nostoc punctiforme (strain ATCC 29133 / PCC 73102)</name>
    <dbReference type="NCBI Taxonomy" id="63737"/>
    <lineage>
        <taxon>Bacteria</taxon>
        <taxon>Bacillati</taxon>
        <taxon>Cyanobacteriota</taxon>
        <taxon>Cyanophyceae</taxon>
        <taxon>Nostocales</taxon>
        <taxon>Nostocaceae</taxon>
        <taxon>Nostoc</taxon>
    </lineage>
</organism>
<reference key="1">
    <citation type="journal article" date="2013" name="Plant Physiol.">
        <title>A Nostoc punctiforme Sugar Transporter Necessary to Establish a Cyanobacterium-Plant Symbiosis.</title>
        <authorList>
            <person name="Ekman M."/>
            <person name="Picossi S."/>
            <person name="Campbell E.L."/>
            <person name="Meeks J.C."/>
            <person name="Flores E."/>
        </authorList>
    </citation>
    <scope>NUCLEOTIDE SEQUENCE [LARGE SCALE GENOMIC DNA]</scope>
    <source>
        <strain>ATCC 29133 / PCC 73102</strain>
    </source>
</reference>
<feature type="chain" id="PRO_0000354208" description="Small ribosomal subunit protein uS15">
    <location>
        <begin position="1"/>
        <end position="89"/>
    </location>
</feature>
<evidence type="ECO:0000255" key="1">
    <source>
        <dbReference type="HAMAP-Rule" id="MF_01343"/>
    </source>
</evidence>
<evidence type="ECO:0000305" key="2"/>
<comment type="function">
    <text evidence="1">One of the primary rRNA binding proteins, it binds directly to 16S rRNA where it helps nucleate assembly of the platform of the 30S subunit by binding and bridging several RNA helices of the 16S rRNA.</text>
</comment>
<comment type="function">
    <text evidence="1">Forms an intersubunit bridge (bridge B4) with the 23S rRNA of the 50S subunit in the ribosome.</text>
</comment>
<comment type="subunit">
    <text evidence="1">Part of the 30S ribosomal subunit. Forms a bridge to the 50S subunit in the 70S ribosome, contacting the 23S rRNA.</text>
</comment>
<comment type="similarity">
    <text evidence="1">Belongs to the universal ribosomal protein uS15 family.</text>
</comment>
<comment type="sequence caution" evidence="2">
    <conflict type="erroneous initiation">
        <sequence resource="EMBL-CDS" id="ACC79475"/>
    </conflict>
</comment>
<proteinExistence type="inferred from homology"/>
<dbReference type="EMBL" id="CP001037">
    <property type="protein sequence ID" value="ACC79475.1"/>
    <property type="status" value="ALT_INIT"/>
    <property type="molecule type" value="Genomic_DNA"/>
</dbReference>
<dbReference type="RefSeq" id="WP_041565894.1">
    <property type="nucleotide sequence ID" value="NC_010628.1"/>
</dbReference>
<dbReference type="SMR" id="B2J9H6"/>
<dbReference type="STRING" id="63737.Npun_F0723"/>
<dbReference type="EnsemblBacteria" id="ACC79475">
    <property type="protein sequence ID" value="ACC79475"/>
    <property type="gene ID" value="Npun_F0723"/>
</dbReference>
<dbReference type="KEGG" id="npu:Npun_F0723"/>
<dbReference type="eggNOG" id="COG0184">
    <property type="taxonomic scope" value="Bacteria"/>
</dbReference>
<dbReference type="HOGENOM" id="CLU_148518_0_0_3"/>
<dbReference type="OrthoDB" id="9799262at2"/>
<dbReference type="PhylomeDB" id="B2J9H6"/>
<dbReference type="Proteomes" id="UP000001191">
    <property type="component" value="Chromosome"/>
</dbReference>
<dbReference type="GO" id="GO:0022627">
    <property type="term" value="C:cytosolic small ribosomal subunit"/>
    <property type="evidence" value="ECO:0007669"/>
    <property type="project" value="TreeGrafter"/>
</dbReference>
<dbReference type="GO" id="GO:0019843">
    <property type="term" value="F:rRNA binding"/>
    <property type="evidence" value="ECO:0007669"/>
    <property type="project" value="UniProtKB-UniRule"/>
</dbReference>
<dbReference type="GO" id="GO:0003735">
    <property type="term" value="F:structural constituent of ribosome"/>
    <property type="evidence" value="ECO:0007669"/>
    <property type="project" value="InterPro"/>
</dbReference>
<dbReference type="GO" id="GO:0006412">
    <property type="term" value="P:translation"/>
    <property type="evidence" value="ECO:0007669"/>
    <property type="project" value="UniProtKB-UniRule"/>
</dbReference>
<dbReference type="CDD" id="cd00353">
    <property type="entry name" value="Ribosomal_S15p_S13e"/>
    <property type="match status" value="1"/>
</dbReference>
<dbReference type="FunFam" id="1.10.287.10:FF:000002">
    <property type="entry name" value="30S ribosomal protein S15"/>
    <property type="match status" value="1"/>
</dbReference>
<dbReference type="Gene3D" id="6.10.250.3130">
    <property type="match status" value="1"/>
</dbReference>
<dbReference type="Gene3D" id="1.10.287.10">
    <property type="entry name" value="S15/NS1, RNA-binding"/>
    <property type="match status" value="1"/>
</dbReference>
<dbReference type="HAMAP" id="MF_01343_B">
    <property type="entry name" value="Ribosomal_uS15_B"/>
    <property type="match status" value="1"/>
</dbReference>
<dbReference type="InterPro" id="IPR000589">
    <property type="entry name" value="Ribosomal_uS15"/>
</dbReference>
<dbReference type="InterPro" id="IPR005290">
    <property type="entry name" value="Ribosomal_uS15_bac-type"/>
</dbReference>
<dbReference type="InterPro" id="IPR009068">
    <property type="entry name" value="uS15_NS1_RNA-bd_sf"/>
</dbReference>
<dbReference type="NCBIfam" id="TIGR00952">
    <property type="entry name" value="S15_bact"/>
    <property type="match status" value="1"/>
</dbReference>
<dbReference type="PANTHER" id="PTHR23321">
    <property type="entry name" value="RIBOSOMAL PROTEIN S15, BACTERIAL AND ORGANELLAR"/>
    <property type="match status" value="1"/>
</dbReference>
<dbReference type="PANTHER" id="PTHR23321:SF26">
    <property type="entry name" value="SMALL RIBOSOMAL SUBUNIT PROTEIN US15M"/>
    <property type="match status" value="1"/>
</dbReference>
<dbReference type="Pfam" id="PF00312">
    <property type="entry name" value="Ribosomal_S15"/>
    <property type="match status" value="1"/>
</dbReference>
<dbReference type="SMART" id="SM01387">
    <property type="entry name" value="Ribosomal_S15"/>
    <property type="match status" value="1"/>
</dbReference>
<dbReference type="SUPFAM" id="SSF47060">
    <property type="entry name" value="S15/NS1 RNA-binding domain"/>
    <property type="match status" value="1"/>
</dbReference>
<dbReference type="PROSITE" id="PS00362">
    <property type="entry name" value="RIBOSOMAL_S15"/>
    <property type="match status" value="1"/>
</dbReference>
<gene>
    <name evidence="1" type="primary">rpsO</name>
    <name evidence="1" type="synonym">rps15</name>
    <name type="ordered locus">Npun_F0723</name>
</gene>
<name>RS15_NOSP7</name>
<keyword id="KW-1185">Reference proteome</keyword>
<keyword id="KW-0687">Ribonucleoprotein</keyword>
<keyword id="KW-0689">Ribosomal protein</keyword>
<keyword id="KW-0694">RNA-binding</keyword>
<keyword id="KW-0699">rRNA-binding</keyword>